<comment type="function">
    <text evidence="1">Catalyzes the pyrimidine ring opening between N-3 and C-4 by an unusual flavin hydroperoxide-catalyzed mechanism, adding oxygen atoms in the process to yield ureidoacrylate peracid, that immediately reacts with FMN forming ureidoacrylate and FMN-N(5)-oxide. The FMN-N(5)-oxide reacts spontaneously with NADH to produce FMN. Requires the flavin reductase RutF to regenerate FMN in vivo.</text>
</comment>
<comment type="catalytic activity">
    <reaction evidence="1">
        <text>uracil + FMNH2 + NADH + O2 = (Z)-3-ureidoacrylate + FMN + NAD(+) + H2O + H(+)</text>
        <dbReference type="Rhea" id="RHEA:31587"/>
        <dbReference type="ChEBI" id="CHEBI:15377"/>
        <dbReference type="ChEBI" id="CHEBI:15378"/>
        <dbReference type="ChEBI" id="CHEBI:15379"/>
        <dbReference type="ChEBI" id="CHEBI:17568"/>
        <dbReference type="ChEBI" id="CHEBI:57540"/>
        <dbReference type="ChEBI" id="CHEBI:57618"/>
        <dbReference type="ChEBI" id="CHEBI:57945"/>
        <dbReference type="ChEBI" id="CHEBI:58210"/>
        <dbReference type="ChEBI" id="CHEBI:59891"/>
        <dbReference type="EC" id="1.14.99.46"/>
    </reaction>
</comment>
<comment type="catalytic activity">
    <reaction evidence="1">
        <text>thymine + FMNH2 + NADH + O2 = (Z)-2-methylureidoacrylate + FMN + NAD(+) + H2O + H(+)</text>
        <dbReference type="Rhea" id="RHEA:31599"/>
        <dbReference type="ChEBI" id="CHEBI:15377"/>
        <dbReference type="ChEBI" id="CHEBI:15378"/>
        <dbReference type="ChEBI" id="CHEBI:15379"/>
        <dbReference type="ChEBI" id="CHEBI:17821"/>
        <dbReference type="ChEBI" id="CHEBI:57540"/>
        <dbReference type="ChEBI" id="CHEBI:57618"/>
        <dbReference type="ChEBI" id="CHEBI:57945"/>
        <dbReference type="ChEBI" id="CHEBI:58210"/>
        <dbReference type="ChEBI" id="CHEBI:143783"/>
        <dbReference type="EC" id="1.14.99.46"/>
    </reaction>
</comment>
<comment type="similarity">
    <text evidence="1">Belongs to the NtaA/SnaA/DszA monooxygenase family. RutA subfamily.</text>
</comment>
<keyword id="KW-0285">Flavoprotein</keyword>
<keyword id="KW-0288">FMN</keyword>
<keyword id="KW-0503">Monooxygenase</keyword>
<keyword id="KW-0521">NADP</keyword>
<keyword id="KW-0560">Oxidoreductase</keyword>
<accession>C9Y0S7</accession>
<name>RUTA_CROTZ</name>
<organism>
    <name type="scientific">Cronobacter turicensis (strain DSM 18703 / CCUG 55852 / LMG 23827 / z3032)</name>
    <dbReference type="NCBI Taxonomy" id="693216"/>
    <lineage>
        <taxon>Bacteria</taxon>
        <taxon>Pseudomonadati</taxon>
        <taxon>Pseudomonadota</taxon>
        <taxon>Gammaproteobacteria</taxon>
        <taxon>Enterobacterales</taxon>
        <taxon>Enterobacteriaceae</taxon>
        <taxon>Cronobacter</taxon>
    </lineage>
</organism>
<evidence type="ECO:0000255" key="1">
    <source>
        <dbReference type="HAMAP-Rule" id="MF_01699"/>
    </source>
</evidence>
<protein>
    <recommendedName>
        <fullName evidence="1">Pyrimidine monooxygenase RutA</fullName>
        <ecNumber evidence="1">1.14.99.46</ecNumber>
    </recommendedName>
</protein>
<reference key="1">
    <citation type="journal article" date="2011" name="J. Bacteriol.">
        <title>Complete genome sequence of Cronobacter turicensis LMG 23827, a food-borne pathogen causing deaths in neonates.</title>
        <authorList>
            <person name="Stephan R."/>
            <person name="Lehner A."/>
            <person name="Tischler P."/>
            <person name="Rattei T."/>
        </authorList>
    </citation>
    <scope>NUCLEOTIDE SEQUENCE [LARGE SCALE GENOMIC DNA]</scope>
    <source>
        <strain>DSM 18703 / CCUG 55852 / LMG 23827 / z3032</strain>
    </source>
</reference>
<gene>
    <name evidence="1" type="primary">rutA</name>
    <name type="ordered locus">Ctu_15930</name>
</gene>
<proteinExistence type="inferred from homology"/>
<feature type="chain" id="PRO_0000402589" description="Pyrimidine monooxygenase RutA">
    <location>
        <begin position="1"/>
        <end position="378"/>
    </location>
</feature>
<feature type="binding site" evidence="1">
    <location>
        <begin position="65"/>
        <end position="66"/>
    </location>
    <ligand>
        <name>FMN</name>
        <dbReference type="ChEBI" id="CHEBI:58210"/>
    </ligand>
</feature>
<feature type="binding site" evidence="1">
    <location>
        <position position="131"/>
    </location>
    <ligand>
        <name>FMN</name>
        <dbReference type="ChEBI" id="CHEBI:58210"/>
    </ligand>
</feature>
<feature type="binding site" evidence="1">
    <location>
        <position position="140"/>
    </location>
    <ligand>
        <name>FMN</name>
        <dbReference type="ChEBI" id="CHEBI:58210"/>
    </ligand>
</feature>
<feature type="binding site" evidence="1">
    <location>
        <begin position="156"/>
        <end position="157"/>
    </location>
    <ligand>
        <name>FMN</name>
        <dbReference type="ChEBI" id="CHEBI:58210"/>
    </ligand>
</feature>
<feature type="binding site" evidence="1">
    <location>
        <position position="206"/>
    </location>
    <ligand>
        <name>FMN</name>
        <dbReference type="ChEBI" id="CHEBI:58210"/>
    </ligand>
</feature>
<sequence>MQRHATVLLPAKERFVMKIGVFVPIGNNGWLISTHAPQYMPTFELNKAIVQKAEQQQFDFALSMIKLRGFGGKTEFWDHNLESFTLMAGLAAVTSRIQIYATAATLTLPPAIVARMASTIDSISGGRFGVNLVTGWQKPEYEQMGLWPGDEYFSRRYDYLTEYVHVLRDLWDTGQSDFKGDYFTMNDCRVSPRPQQPMKVICAGQSDAGMAFSAQHADYNFCFGKGVNTPAAFAPTAARMKAAADKAGRNVGSYVLFMVIADETDDAARAKWEHYKAGADEEALSWLTEQSQKDTRSGADTNVRQMADPTSAVNINMGTLVGSYASVARMLDEVAAVPGTEGVLLTFDDFLTGIDAFGEHIQPLMRCRDHLRVTQEVA</sequence>
<dbReference type="EC" id="1.14.99.46" evidence="1"/>
<dbReference type="EMBL" id="FN543093">
    <property type="protein sequence ID" value="CBA29797.1"/>
    <property type="molecule type" value="Genomic_DNA"/>
</dbReference>
<dbReference type="SMR" id="C9Y0S7"/>
<dbReference type="KEGG" id="ctu:CTU_15930"/>
<dbReference type="PATRIC" id="fig|693216.3.peg.1518"/>
<dbReference type="HOGENOM" id="CLU_027853_1_1_6"/>
<dbReference type="Proteomes" id="UP000002069">
    <property type="component" value="Chromosome"/>
</dbReference>
<dbReference type="GO" id="GO:0008726">
    <property type="term" value="F:alkanesulfonate monooxygenase activity"/>
    <property type="evidence" value="ECO:0007669"/>
    <property type="project" value="TreeGrafter"/>
</dbReference>
<dbReference type="GO" id="GO:0052614">
    <property type="term" value="F:uracil oxygenase activity"/>
    <property type="evidence" value="ECO:0007669"/>
    <property type="project" value="UniProtKB-EC"/>
</dbReference>
<dbReference type="GO" id="GO:0046306">
    <property type="term" value="P:alkanesulfonate catabolic process"/>
    <property type="evidence" value="ECO:0007669"/>
    <property type="project" value="TreeGrafter"/>
</dbReference>
<dbReference type="GO" id="GO:0019740">
    <property type="term" value="P:nitrogen utilization"/>
    <property type="evidence" value="ECO:0007669"/>
    <property type="project" value="UniProtKB-UniRule"/>
</dbReference>
<dbReference type="GO" id="GO:0006212">
    <property type="term" value="P:uracil catabolic process"/>
    <property type="evidence" value="ECO:0007669"/>
    <property type="project" value="UniProtKB-UniRule"/>
</dbReference>
<dbReference type="CDD" id="cd01094">
    <property type="entry name" value="Alkanesulfonate_monoxygenase"/>
    <property type="match status" value="1"/>
</dbReference>
<dbReference type="FunFam" id="3.20.20.30:FF:000003">
    <property type="entry name" value="Pyrimidine monooxygenase RutA"/>
    <property type="match status" value="1"/>
</dbReference>
<dbReference type="Gene3D" id="3.20.20.30">
    <property type="entry name" value="Luciferase-like domain"/>
    <property type="match status" value="1"/>
</dbReference>
<dbReference type="HAMAP" id="MF_01699">
    <property type="entry name" value="RutA"/>
    <property type="match status" value="1"/>
</dbReference>
<dbReference type="InterPro" id="IPR011251">
    <property type="entry name" value="Luciferase-like_dom"/>
</dbReference>
<dbReference type="InterPro" id="IPR036661">
    <property type="entry name" value="Luciferase-like_sf"/>
</dbReference>
<dbReference type="InterPro" id="IPR019914">
    <property type="entry name" value="Pyrimidine_monooxygenase_RutA"/>
</dbReference>
<dbReference type="InterPro" id="IPR050172">
    <property type="entry name" value="SsuD_RutA_monooxygenase"/>
</dbReference>
<dbReference type="NCBIfam" id="TIGR03612">
    <property type="entry name" value="RutA"/>
    <property type="match status" value="1"/>
</dbReference>
<dbReference type="PANTHER" id="PTHR42847">
    <property type="entry name" value="ALKANESULFONATE MONOOXYGENASE"/>
    <property type="match status" value="1"/>
</dbReference>
<dbReference type="PANTHER" id="PTHR42847:SF4">
    <property type="entry name" value="ALKANESULFONATE MONOOXYGENASE-RELATED"/>
    <property type="match status" value="1"/>
</dbReference>
<dbReference type="Pfam" id="PF00296">
    <property type="entry name" value="Bac_luciferase"/>
    <property type="match status" value="1"/>
</dbReference>
<dbReference type="SUPFAM" id="SSF51679">
    <property type="entry name" value="Bacterial luciferase-like"/>
    <property type="match status" value="1"/>
</dbReference>